<name>LGT_CAMJ8</name>
<accession>A8FKJ4</accession>
<dbReference type="EC" id="2.5.1.145" evidence="1"/>
<dbReference type="EMBL" id="CP000814">
    <property type="protein sequence ID" value="ABV51981.1"/>
    <property type="molecule type" value="Genomic_DNA"/>
</dbReference>
<dbReference type="RefSeq" id="WP_002854600.1">
    <property type="nucleotide sequence ID" value="NC_009839.1"/>
</dbReference>
<dbReference type="SMR" id="A8FKJ4"/>
<dbReference type="KEGG" id="cju:C8J_0382"/>
<dbReference type="HOGENOM" id="CLU_013386_1_2_7"/>
<dbReference type="UniPathway" id="UPA00664"/>
<dbReference type="GO" id="GO:0005886">
    <property type="term" value="C:plasma membrane"/>
    <property type="evidence" value="ECO:0007669"/>
    <property type="project" value="UniProtKB-SubCell"/>
</dbReference>
<dbReference type="GO" id="GO:0008961">
    <property type="term" value="F:phosphatidylglycerol-prolipoprotein diacylglyceryl transferase activity"/>
    <property type="evidence" value="ECO:0007669"/>
    <property type="project" value="UniProtKB-UniRule"/>
</dbReference>
<dbReference type="GO" id="GO:0042158">
    <property type="term" value="P:lipoprotein biosynthetic process"/>
    <property type="evidence" value="ECO:0007669"/>
    <property type="project" value="UniProtKB-UniRule"/>
</dbReference>
<dbReference type="HAMAP" id="MF_01147">
    <property type="entry name" value="Lgt"/>
    <property type="match status" value="1"/>
</dbReference>
<dbReference type="InterPro" id="IPR001640">
    <property type="entry name" value="Lgt"/>
</dbReference>
<dbReference type="NCBIfam" id="TIGR00544">
    <property type="entry name" value="lgt"/>
    <property type="match status" value="1"/>
</dbReference>
<dbReference type="PANTHER" id="PTHR30589:SF0">
    <property type="entry name" value="PHOSPHATIDYLGLYCEROL--PROLIPOPROTEIN DIACYLGLYCERYL TRANSFERASE"/>
    <property type="match status" value="1"/>
</dbReference>
<dbReference type="PANTHER" id="PTHR30589">
    <property type="entry name" value="PROLIPOPROTEIN DIACYLGLYCERYL TRANSFERASE"/>
    <property type="match status" value="1"/>
</dbReference>
<dbReference type="Pfam" id="PF01790">
    <property type="entry name" value="LGT"/>
    <property type="match status" value="1"/>
</dbReference>
<dbReference type="PROSITE" id="PS01311">
    <property type="entry name" value="LGT"/>
    <property type="match status" value="1"/>
</dbReference>
<keyword id="KW-0997">Cell inner membrane</keyword>
<keyword id="KW-1003">Cell membrane</keyword>
<keyword id="KW-0472">Membrane</keyword>
<keyword id="KW-0808">Transferase</keyword>
<keyword id="KW-0812">Transmembrane</keyword>
<keyword id="KW-1133">Transmembrane helix</keyword>
<reference key="1">
    <citation type="journal article" date="2007" name="J. Bacteriol.">
        <title>The complete genome sequence of Campylobacter jejuni strain 81116 (NCTC11828).</title>
        <authorList>
            <person name="Pearson B.M."/>
            <person name="Gaskin D.J.H."/>
            <person name="Segers R.P.A.M."/>
            <person name="Wells J.M."/>
            <person name="Nuijten P.J.M."/>
            <person name="van Vliet A.H.M."/>
        </authorList>
    </citation>
    <scope>NUCLEOTIDE SEQUENCE [LARGE SCALE GENOMIC DNA]</scope>
    <source>
        <strain>81116 / NCTC 11828</strain>
    </source>
</reference>
<comment type="function">
    <text evidence="1">Catalyzes the transfer of the diacylglyceryl group from phosphatidylglycerol to the sulfhydryl group of the N-terminal cysteine of a prolipoprotein, the first step in the formation of mature lipoproteins.</text>
</comment>
<comment type="catalytic activity">
    <reaction evidence="1">
        <text>L-cysteinyl-[prolipoprotein] + a 1,2-diacyl-sn-glycero-3-phospho-(1'-sn-glycerol) = an S-1,2-diacyl-sn-glyceryl-L-cysteinyl-[prolipoprotein] + sn-glycerol 1-phosphate + H(+)</text>
        <dbReference type="Rhea" id="RHEA:56712"/>
        <dbReference type="Rhea" id="RHEA-COMP:14679"/>
        <dbReference type="Rhea" id="RHEA-COMP:14680"/>
        <dbReference type="ChEBI" id="CHEBI:15378"/>
        <dbReference type="ChEBI" id="CHEBI:29950"/>
        <dbReference type="ChEBI" id="CHEBI:57685"/>
        <dbReference type="ChEBI" id="CHEBI:64716"/>
        <dbReference type="ChEBI" id="CHEBI:140658"/>
        <dbReference type="EC" id="2.5.1.145"/>
    </reaction>
</comment>
<comment type="pathway">
    <text evidence="1">Protein modification; lipoprotein biosynthesis (diacylglyceryl transfer).</text>
</comment>
<comment type="subcellular location">
    <subcellularLocation>
        <location evidence="1">Cell inner membrane</location>
        <topology evidence="1">Multi-pass membrane protein</topology>
    </subcellularLocation>
</comment>
<comment type="similarity">
    <text evidence="1">Belongs to the Lgt family.</text>
</comment>
<evidence type="ECO:0000255" key="1">
    <source>
        <dbReference type="HAMAP-Rule" id="MF_01147"/>
    </source>
</evidence>
<sequence length="271" mass="31525">MEFWQHIYSNFNVIAFSIFGLKVHWYGIMYVIALLLALLLAKFFVRKFQLDINEKHLDSYFIWVEIGVILGARLGYILIYDANTMYYITHPWQIFNPYINGEFVGIRGMSYHGAIIGFLIATLLFCKKYKTNPWIFLDLVALSVPLAYVFGRIGNFLNQELFGRITNVPWGIYVDGVLRHPSQLYEAFLEGIVVFIIVYLARFKQSFQGELILVYAGAYSLARFICEFYREPDFGIGFVLWGMSMGQILSFIMFITALLVYICIKFKKVNI</sequence>
<proteinExistence type="inferred from homology"/>
<feature type="chain" id="PRO_1000073054" description="Phosphatidylglycerol--prolipoprotein diacylglyceryl transferase">
    <location>
        <begin position="1"/>
        <end position="271"/>
    </location>
</feature>
<feature type="transmembrane region" description="Helical" evidence="1">
    <location>
        <begin position="25"/>
        <end position="45"/>
    </location>
</feature>
<feature type="transmembrane region" description="Helical" evidence="1">
    <location>
        <begin position="60"/>
        <end position="80"/>
    </location>
</feature>
<feature type="transmembrane region" description="Helical" evidence="1">
    <location>
        <begin position="103"/>
        <end position="123"/>
    </location>
</feature>
<feature type="transmembrane region" description="Helical" evidence="1">
    <location>
        <begin position="134"/>
        <end position="154"/>
    </location>
</feature>
<feature type="transmembrane region" description="Helical" evidence="1">
    <location>
        <begin position="181"/>
        <end position="201"/>
    </location>
</feature>
<feature type="transmembrane region" description="Helical" evidence="1">
    <location>
        <begin position="209"/>
        <end position="229"/>
    </location>
</feature>
<feature type="transmembrane region" description="Helical" evidence="1">
    <location>
        <begin position="235"/>
        <end position="255"/>
    </location>
</feature>
<feature type="binding site" evidence="1">
    <location>
        <position position="152"/>
    </location>
    <ligand>
        <name>a 1,2-diacyl-sn-glycero-3-phospho-(1'-sn-glycerol)</name>
        <dbReference type="ChEBI" id="CHEBI:64716"/>
    </ligand>
</feature>
<gene>
    <name evidence="1" type="primary">lgt</name>
    <name type="ordered locus">C8J_0382</name>
</gene>
<organism>
    <name type="scientific">Campylobacter jejuni subsp. jejuni serotype O:6 (strain 81116 / NCTC 11828)</name>
    <dbReference type="NCBI Taxonomy" id="407148"/>
    <lineage>
        <taxon>Bacteria</taxon>
        <taxon>Pseudomonadati</taxon>
        <taxon>Campylobacterota</taxon>
        <taxon>Epsilonproteobacteria</taxon>
        <taxon>Campylobacterales</taxon>
        <taxon>Campylobacteraceae</taxon>
        <taxon>Campylobacter</taxon>
    </lineage>
</organism>
<protein>
    <recommendedName>
        <fullName evidence="1">Phosphatidylglycerol--prolipoprotein diacylglyceryl transferase</fullName>
        <ecNumber evidence="1">2.5.1.145</ecNumber>
    </recommendedName>
</protein>